<feature type="chain" id="PRO_1000086615" description="Large ribosomal subunit protein uL5">
    <location>
        <begin position="1"/>
        <end position="184"/>
    </location>
</feature>
<organism>
    <name type="scientific">Ureaplasma parvum serovar 3 (strain ATCC 27815 / 27 / NCTC 11736)</name>
    <dbReference type="NCBI Taxonomy" id="505682"/>
    <lineage>
        <taxon>Bacteria</taxon>
        <taxon>Bacillati</taxon>
        <taxon>Mycoplasmatota</taxon>
        <taxon>Mycoplasmoidales</taxon>
        <taxon>Mycoplasmoidaceae</taxon>
        <taxon>Ureaplasma</taxon>
    </lineage>
</organism>
<name>RL5_UREP2</name>
<keyword id="KW-0687">Ribonucleoprotein</keyword>
<keyword id="KW-0689">Ribosomal protein</keyword>
<keyword id="KW-0694">RNA-binding</keyword>
<keyword id="KW-0699">rRNA-binding</keyword>
<keyword id="KW-0820">tRNA-binding</keyword>
<dbReference type="EMBL" id="CP000942">
    <property type="protein sequence ID" value="ACA33106.1"/>
    <property type="molecule type" value="Genomic_DNA"/>
</dbReference>
<dbReference type="RefSeq" id="WP_006688965.1">
    <property type="nucleotide sequence ID" value="NC_010503.1"/>
</dbReference>
<dbReference type="SMR" id="B1AIN2"/>
<dbReference type="GeneID" id="29672530"/>
<dbReference type="KEGG" id="upa:UPA3_0251"/>
<dbReference type="HOGENOM" id="CLU_061015_2_1_14"/>
<dbReference type="Proteomes" id="UP000002162">
    <property type="component" value="Chromosome"/>
</dbReference>
<dbReference type="GO" id="GO:1990904">
    <property type="term" value="C:ribonucleoprotein complex"/>
    <property type="evidence" value="ECO:0007669"/>
    <property type="project" value="UniProtKB-KW"/>
</dbReference>
<dbReference type="GO" id="GO:0005840">
    <property type="term" value="C:ribosome"/>
    <property type="evidence" value="ECO:0007669"/>
    <property type="project" value="UniProtKB-KW"/>
</dbReference>
<dbReference type="GO" id="GO:0019843">
    <property type="term" value="F:rRNA binding"/>
    <property type="evidence" value="ECO:0007669"/>
    <property type="project" value="UniProtKB-UniRule"/>
</dbReference>
<dbReference type="GO" id="GO:0003735">
    <property type="term" value="F:structural constituent of ribosome"/>
    <property type="evidence" value="ECO:0007669"/>
    <property type="project" value="InterPro"/>
</dbReference>
<dbReference type="GO" id="GO:0000049">
    <property type="term" value="F:tRNA binding"/>
    <property type="evidence" value="ECO:0007669"/>
    <property type="project" value="UniProtKB-UniRule"/>
</dbReference>
<dbReference type="GO" id="GO:0006412">
    <property type="term" value="P:translation"/>
    <property type="evidence" value="ECO:0007669"/>
    <property type="project" value="UniProtKB-UniRule"/>
</dbReference>
<dbReference type="FunFam" id="3.30.1440.10:FF:000001">
    <property type="entry name" value="50S ribosomal protein L5"/>
    <property type="match status" value="1"/>
</dbReference>
<dbReference type="Gene3D" id="3.30.1440.10">
    <property type="match status" value="1"/>
</dbReference>
<dbReference type="HAMAP" id="MF_01333_B">
    <property type="entry name" value="Ribosomal_uL5_B"/>
    <property type="match status" value="1"/>
</dbReference>
<dbReference type="InterPro" id="IPR002132">
    <property type="entry name" value="Ribosomal_uL5"/>
</dbReference>
<dbReference type="InterPro" id="IPR020930">
    <property type="entry name" value="Ribosomal_uL5_bac-type"/>
</dbReference>
<dbReference type="InterPro" id="IPR031309">
    <property type="entry name" value="Ribosomal_uL5_C"/>
</dbReference>
<dbReference type="InterPro" id="IPR020929">
    <property type="entry name" value="Ribosomal_uL5_CS"/>
</dbReference>
<dbReference type="InterPro" id="IPR022803">
    <property type="entry name" value="Ribosomal_uL5_dom_sf"/>
</dbReference>
<dbReference type="InterPro" id="IPR031310">
    <property type="entry name" value="Ribosomal_uL5_N"/>
</dbReference>
<dbReference type="NCBIfam" id="NF000585">
    <property type="entry name" value="PRK00010.1"/>
    <property type="match status" value="1"/>
</dbReference>
<dbReference type="PANTHER" id="PTHR11994">
    <property type="entry name" value="60S RIBOSOMAL PROTEIN L11-RELATED"/>
    <property type="match status" value="1"/>
</dbReference>
<dbReference type="Pfam" id="PF00281">
    <property type="entry name" value="Ribosomal_L5"/>
    <property type="match status" value="1"/>
</dbReference>
<dbReference type="Pfam" id="PF00673">
    <property type="entry name" value="Ribosomal_L5_C"/>
    <property type="match status" value="1"/>
</dbReference>
<dbReference type="PIRSF" id="PIRSF002161">
    <property type="entry name" value="Ribosomal_L5"/>
    <property type="match status" value="1"/>
</dbReference>
<dbReference type="SUPFAM" id="SSF55282">
    <property type="entry name" value="RL5-like"/>
    <property type="match status" value="1"/>
</dbReference>
<dbReference type="PROSITE" id="PS00358">
    <property type="entry name" value="RIBOSOMAL_L5"/>
    <property type="match status" value="1"/>
</dbReference>
<gene>
    <name evidence="1" type="primary">rplE</name>
    <name type="ordered locus">UPA3_0251</name>
</gene>
<comment type="function">
    <text evidence="1">This is one of the proteins that bind and probably mediate the attachment of the 5S RNA into the large ribosomal subunit, where it forms part of the central protuberance. In the 70S ribosome it contacts protein S13 of the 30S subunit (bridge B1b), connecting the 2 subunits; this bridge is implicated in subunit movement. Contacts the P site tRNA; the 5S rRNA and some of its associated proteins might help stabilize positioning of ribosome-bound tRNAs.</text>
</comment>
<comment type="subunit">
    <text evidence="1">Part of the 50S ribosomal subunit; part of the 5S rRNA/L5/L18/L25 subcomplex. Contacts the 5S rRNA and the P site tRNA. Forms a bridge to the 30S subunit in the 70S ribosome.</text>
</comment>
<comment type="similarity">
    <text evidence="1">Belongs to the universal ribosomal protein uL5 family.</text>
</comment>
<evidence type="ECO:0000255" key="1">
    <source>
        <dbReference type="HAMAP-Rule" id="MF_01333"/>
    </source>
</evidence>
<evidence type="ECO:0000305" key="2"/>
<accession>B1AIN2</accession>
<reference key="1">
    <citation type="submission" date="2008-02" db="EMBL/GenBank/DDBJ databases">
        <title>Genome sequence of Ureaplasma parvum serovar 3.</title>
        <authorList>
            <person name="Methe B.A."/>
            <person name="Glass J."/>
            <person name="Waites K."/>
            <person name="Shrivastava S."/>
        </authorList>
    </citation>
    <scope>NUCLEOTIDE SEQUENCE [LARGE SCALE GENOMIC DNA]</scope>
    <source>
        <strain>ATCC 27815 / 27 / NCTC 11736</strain>
    </source>
</reference>
<protein>
    <recommendedName>
        <fullName evidence="1">Large ribosomal subunit protein uL5</fullName>
    </recommendedName>
    <alternativeName>
        <fullName evidence="2">50S ribosomal protein L5</fullName>
    </alternativeName>
</protein>
<sequence>MAFLKDLYKNKVAKDLQKEFAYSSVMQIPKIEKVVINAGIGNAVADKKHLEAAISELTLITGQRPVETKAKKSIATFKLRAGQSIGAKVTLRGDRMWAFIETLFNIALPRVRDFKGISNNSFDNQGNYTLGIKEQIIFPQVVYDDVKSVRGFDVTFVTTAKTAQEAKALLVGLGAPFQKVRGDK</sequence>
<proteinExistence type="inferred from homology"/>